<name>RS11_BURVG</name>
<reference key="1">
    <citation type="submission" date="2007-03" db="EMBL/GenBank/DDBJ databases">
        <title>Complete sequence of chromosome 1 of Burkholderia vietnamiensis G4.</title>
        <authorList>
            <consortium name="US DOE Joint Genome Institute"/>
            <person name="Copeland A."/>
            <person name="Lucas S."/>
            <person name="Lapidus A."/>
            <person name="Barry K."/>
            <person name="Detter J.C."/>
            <person name="Glavina del Rio T."/>
            <person name="Hammon N."/>
            <person name="Israni S."/>
            <person name="Dalin E."/>
            <person name="Tice H."/>
            <person name="Pitluck S."/>
            <person name="Chain P."/>
            <person name="Malfatti S."/>
            <person name="Shin M."/>
            <person name="Vergez L."/>
            <person name="Schmutz J."/>
            <person name="Larimer F."/>
            <person name="Land M."/>
            <person name="Hauser L."/>
            <person name="Kyrpides N."/>
            <person name="Tiedje J."/>
            <person name="Richardson P."/>
        </authorList>
    </citation>
    <scope>NUCLEOTIDE SEQUENCE [LARGE SCALE GENOMIC DNA]</scope>
    <source>
        <strain>G4 / LMG 22486</strain>
    </source>
</reference>
<gene>
    <name evidence="1" type="primary">rpsK</name>
    <name type="ordered locus">Bcep1808_0354</name>
</gene>
<keyword id="KW-0687">Ribonucleoprotein</keyword>
<keyword id="KW-0689">Ribosomal protein</keyword>
<keyword id="KW-0694">RNA-binding</keyword>
<keyword id="KW-0699">rRNA-binding</keyword>
<sequence>MAKASNTAAQRVRKKVKKNVAEGVVHVHASFNNTIITITDRQGNALAWATSGGQGFKGSRKSTPFAAQVAAESAGRVAMEYGVKNLEVRIKGPGPGRESAVRALHGLGIKITAISDVTPIPHNGCRPPKRRRI</sequence>
<evidence type="ECO:0000255" key="1">
    <source>
        <dbReference type="HAMAP-Rule" id="MF_01310"/>
    </source>
</evidence>
<evidence type="ECO:0000305" key="2"/>
<proteinExistence type="inferred from homology"/>
<protein>
    <recommendedName>
        <fullName evidence="1">Small ribosomal subunit protein uS11</fullName>
    </recommendedName>
    <alternativeName>
        <fullName evidence="2">30S ribosomal protein S11</fullName>
    </alternativeName>
</protein>
<accession>A4JAR4</accession>
<feature type="chain" id="PRO_1000051828" description="Small ribosomal subunit protein uS11">
    <location>
        <begin position="1"/>
        <end position="133"/>
    </location>
</feature>
<comment type="function">
    <text evidence="1">Located on the platform of the 30S subunit, it bridges several disparate RNA helices of the 16S rRNA. Forms part of the Shine-Dalgarno cleft in the 70S ribosome.</text>
</comment>
<comment type="subunit">
    <text evidence="1">Part of the 30S ribosomal subunit. Interacts with proteins S7 and S18. Binds to IF-3.</text>
</comment>
<comment type="similarity">
    <text evidence="1">Belongs to the universal ribosomal protein uS11 family.</text>
</comment>
<dbReference type="EMBL" id="CP000614">
    <property type="protein sequence ID" value="ABO53367.1"/>
    <property type="molecule type" value="Genomic_DNA"/>
</dbReference>
<dbReference type="SMR" id="A4JAR4"/>
<dbReference type="KEGG" id="bvi:Bcep1808_0354"/>
<dbReference type="eggNOG" id="COG0100">
    <property type="taxonomic scope" value="Bacteria"/>
</dbReference>
<dbReference type="HOGENOM" id="CLU_072439_5_0_4"/>
<dbReference type="Proteomes" id="UP000002287">
    <property type="component" value="Chromosome 1"/>
</dbReference>
<dbReference type="GO" id="GO:1990904">
    <property type="term" value="C:ribonucleoprotein complex"/>
    <property type="evidence" value="ECO:0007669"/>
    <property type="project" value="UniProtKB-KW"/>
</dbReference>
<dbReference type="GO" id="GO:0005840">
    <property type="term" value="C:ribosome"/>
    <property type="evidence" value="ECO:0007669"/>
    <property type="project" value="UniProtKB-KW"/>
</dbReference>
<dbReference type="GO" id="GO:0019843">
    <property type="term" value="F:rRNA binding"/>
    <property type="evidence" value="ECO:0007669"/>
    <property type="project" value="UniProtKB-UniRule"/>
</dbReference>
<dbReference type="GO" id="GO:0003735">
    <property type="term" value="F:structural constituent of ribosome"/>
    <property type="evidence" value="ECO:0007669"/>
    <property type="project" value="InterPro"/>
</dbReference>
<dbReference type="GO" id="GO:0006412">
    <property type="term" value="P:translation"/>
    <property type="evidence" value="ECO:0007669"/>
    <property type="project" value="UniProtKB-UniRule"/>
</dbReference>
<dbReference type="FunFam" id="3.30.420.80:FF:000001">
    <property type="entry name" value="30S ribosomal protein S11"/>
    <property type="match status" value="1"/>
</dbReference>
<dbReference type="Gene3D" id="3.30.420.80">
    <property type="entry name" value="Ribosomal protein S11"/>
    <property type="match status" value="1"/>
</dbReference>
<dbReference type="HAMAP" id="MF_01310">
    <property type="entry name" value="Ribosomal_uS11"/>
    <property type="match status" value="1"/>
</dbReference>
<dbReference type="InterPro" id="IPR001971">
    <property type="entry name" value="Ribosomal_uS11"/>
</dbReference>
<dbReference type="InterPro" id="IPR019981">
    <property type="entry name" value="Ribosomal_uS11_bac-type"/>
</dbReference>
<dbReference type="InterPro" id="IPR018102">
    <property type="entry name" value="Ribosomal_uS11_CS"/>
</dbReference>
<dbReference type="InterPro" id="IPR036967">
    <property type="entry name" value="Ribosomal_uS11_sf"/>
</dbReference>
<dbReference type="NCBIfam" id="NF003698">
    <property type="entry name" value="PRK05309.1"/>
    <property type="match status" value="1"/>
</dbReference>
<dbReference type="NCBIfam" id="TIGR03632">
    <property type="entry name" value="uS11_bact"/>
    <property type="match status" value="1"/>
</dbReference>
<dbReference type="PANTHER" id="PTHR11759">
    <property type="entry name" value="40S RIBOSOMAL PROTEIN S14/30S RIBOSOMAL PROTEIN S11"/>
    <property type="match status" value="1"/>
</dbReference>
<dbReference type="Pfam" id="PF00411">
    <property type="entry name" value="Ribosomal_S11"/>
    <property type="match status" value="1"/>
</dbReference>
<dbReference type="PIRSF" id="PIRSF002131">
    <property type="entry name" value="Ribosomal_S11"/>
    <property type="match status" value="1"/>
</dbReference>
<dbReference type="SUPFAM" id="SSF53137">
    <property type="entry name" value="Translational machinery components"/>
    <property type="match status" value="1"/>
</dbReference>
<dbReference type="PROSITE" id="PS00054">
    <property type="entry name" value="RIBOSOMAL_S11"/>
    <property type="match status" value="1"/>
</dbReference>
<organism>
    <name type="scientific">Burkholderia vietnamiensis (strain G4 / LMG 22486)</name>
    <name type="common">Burkholderia cepacia (strain R1808)</name>
    <dbReference type="NCBI Taxonomy" id="269482"/>
    <lineage>
        <taxon>Bacteria</taxon>
        <taxon>Pseudomonadati</taxon>
        <taxon>Pseudomonadota</taxon>
        <taxon>Betaproteobacteria</taxon>
        <taxon>Burkholderiales</taxon>
        <taxon>Burkholderiaceae</taxon>
        <taxon>Burkholderia</taxon>
        <taxon>Burkholderia cepacia complex</taxon>
    </lineage>
</organism>